<comment type="function">
    <text evidence="1">Protease subunit of a proteasome-like degradation complex believed to be a general protein degrading machinery.</text>
</comment>
<comment type="catalytic activity">
    <reaction evidence="1">
        <text>ATP-dependent cleavage of peptide bonds with broad specificity.</text>
        <dbReference type="EC" id="3.4.25.2"/>
    </reaction>
</comment>
<comment type="activity regulation">
    <text evidence="1">Allosterically activated by HslU binding.</text>
</comment>
<comment type="subunit">
    <text evidence="1">A double ring-shaped homohexamer of HslV is capped on each side by a ring-shaped HslU homohexamer. The assembly of the HslU/HslV complex is dependent on binding of ATP.</text>
</comment>
<comment type="subcellular location">
    <subcellularLocation>
        <location evidence="1">Cytoplasm</location>
    </subcellularLocation>
</comment>
<comment type="similarity">
    <text evidence="1">Belongs to the peptidase T1B family. HslV subfamily.</text>
</comment>
<dbReference type="EC" id="3.4.25.2" evidence="1"/>
<dbReference type="EMBL" id="AE006470">
    <property type="protein sequence ID" value="AAM72425.1"/>
    <property type="molecule type" value="Genomic_DNA"/>
</dbReference>
<dbReference type="RefSeq" id="NP_662083.1">
    <property type="nucleotide sequence ID" value="NC_002932.3"/>
</dbReference>
<dbReference type="RefSeq" id="WP_010932864.1">
    <property type="nucleotide sequence ID" value="NC_002932.3"/>
</dbReference>
<dbReference type="SMR" id="Q8KD62"/>
<dbReference type="STRING" id="194439.CT1192"/>
<dbReference type="EnsemblBacteria" id="AAM72425">
    <property type="protein sequence ID" value="AAM72425"/>
    <property type="gene ID" value="CT1192"/>
</dbReference>
<dbReference type="KEGG" id="cte:CT1192"/>
<dbReference type="PATRIC" id="fig|194439.7.peg.1087"/>
<dbReference type="eggNOG" id="COG5405">
    <property type="taxonomic scope" value="Bacteria"/>
</dbReference>
<dbReference type="HOGENOM" id="CLU_093872_1_0_10"/>
<dbReference type="OrthoDB" id="9804884at2"/>
<dbReference type="Proteomes" id="UP000001007">
    <property type="component" value="Chromosome"/>
</dbReference>
<dbReference type="GO" id="GO:0009376">
    <property type="term" value="C:HslUV protease complex"/>
    <property type="evidence" value="ECO:0007669"/>
    <property type="project" value="UniProtKB-UniRule"/>
</dbReference>
<dbReference type="GO" id="GO:0005839">
    <property type="term" value="C:proteasome core complex"/>
    <property type="evidence" value="ECO:0007669"/>
    <property type="project" value="InterPro"/>
</dbReference>
<dbReference type="GO" id="GO:0046872">
    <property type="term" value="F:metal ion binding"/>
    <property type="evidence" value="ECO:0007669"/>
    <property type="project" value="UniProtKB-KW"/>
</dbReference>
<dbReference type="GO" id="GO:0004298">
    <property type="term" value="F:threonine-type endopeptidase activity"/>
    <property type="evidence" value="ECO:0007669"/>
    <property type="project" value="UniProtKB-KW"/>
</dbReference>
<dbReference type="GO" id="GO:0051603">
    <property type="term" value="P:proteolysis involved in protein catabolic process"/>
    <property type="evidence" value="ECO:0007669"/>
    <property type="project" value="InterPro"/>
</dbReference>
<dbReference type="CDD" id="cd01913">
    <property type="entry name" value="protease_HslV"/>
    <property type="match status" value="1"/>
</dbReference>
<dbReference type="Gene3D" id="3.60.20.10">
    <property type="entry name" value="Glutamine Phosphoribosylpyrophosphate, subunit 1, domain 1"/>
    <property type="match status" value="1"/>
</dbReference>
<dbReference type="HAMAP" id="MF_00248">
    <property type="entry name" value="HslV"/>
    <property type="match status" value="1"/>
</dbReference>
<dbReference type="InterPro" id="IPR022281">
    <property type="entry name" value="ATP-dep_Prtase_HsIV_su"/>
</dbReference>
<dbReference type="InterPro" id="IPR029055">
    <property type="entry name" value="Ntn_hydrolases_N"/>
</dbReference>
<dbReference type="InterPro" id="IPR001353">
    <property type="entry name" value="Proteasome_sua/b"/>
</dbReference>
<dbReference type="InterPro" id="IPR023333">
    <property type="entry name" value="Proteasome_suB-type"/>
</dbReference>
<dbReference type="NCBIfam" id="TIGR03692">
    <property type="entry name" value="ATP_dep_HslV"/>
    <property type="match status" value="1"/>
</dbReference>
<dbReference type="NCBIfam" id="NF003964">
    <property type="entry name" value="PRK05456.1"/>
    <property type="match status" value="1"/>
</dbReference>
<dbReference type="PANTHER" id="PTHR32194:SF0">
    <property type="entry name" value="ATP-DEPENDENT PROTEASE SUBUNIT HSLV"/>
    <property type="match status" value="1"/>
</dbReference>
<dbReference type="PANTHER" id="PTHR32194">
    <property type="entry name" value="METALLOPROTEASE TLDD"/>
    <property type="match status" value="1"/>
</dbReference>
<dbReference type="Pfam" id="PF00227">
    <property type="entry name" value="Proteasome"/>
    <property type="match status" value="1"/>
</dbReference>
<dbReference type="PIRSF" id="PIRSF039093">
    <property type="entry name" value="HslV"/>
    <property type="match status" value="1"/>
</dbReference>
<dbReference type="SUPFAM" id="SSF56235">
    <property type="entry name" value="N-terminal nucleophile aminohydrolases (Ntn hydrolases)"/>
    <property type="match status" value="1"/>
</dbReference>
<dbReference type="PROSITE" id="PS51476">
    <property type="entry name" value="PROTEASOME_BETA_2"/>
    <property type="match status" value="1"/>
</dbReference>
<evidence type="ECO:0000255" key="1">
    <source>
        <dbReference type="HAMAP-Rule" id="MF_00248"/>
    </source>
</evidence>
<gene>
    <name evidence="1" type="primary">hslV</name>
    <name type="ordered locus">CT1192</name>
</gene>
<reference key="1">
    <citation type="journal article" date="2002" name="Proc. Natl. Acad. Sci. U.S.A.">
        <title>The complete genome sequence of Chlorobium tepidum TLS, a photosynthetic, anaerobic, green-sulfur bacterium.</title>
        <authorList>
            <person name="Eisen J.A."/>
            <person name="Nelson K.E."/>
            <person name="Paulsen I.T."/>
            <person name="Heidelberg J.F."/>
            <person name="Wu M."/>
            <person name="Dodson R.J."/>
            <person name="DeBoy R.T."/>
            <person name="Gwinn M.L."/>
            <person name="Nelson W.C."/>
            <person name="Haft D.H."/>
            <person name="Hickey E.K."/>
            <person name="Peterson J.D."/>
            <person name="Durkin A.S."/>
            <person name="Kolonay J.F."/>
            <person name="Yang F."/>
            <person name="Holt I.E."/>
            <person name="Umayam L.A."/>
            <person name="Mason T.M."/>
            <person name="Brenner M."/>
            <person name="Shea T.P."/>
            <person name="Parksey D.S."/>
            <person name="Nierman W.C."/>
            <person name="Feldblyum T.V."/>
            <person name="Hansen C.L."/>
            <person name="Craven M.B."/>
            <person name="Radune D."/>
            <person name="Vamathevan J.J."/>
            <person name="Khouri H.M."/>
            <person name="White O."/>
            <person name="Gruber T.M."/>
            <person name="Ketchum K.A."/>
            <person name="Venter J.C."/>
            <person name="Tettelin H."/>
            <person name="Bryant D.A."/>
            <person name="Fraser C.M."/>
        </authorList>
    </citation>
    <scope>NUCLEOTIDE SEQUENCE [LARGE SCALE GENOMIC DNA]</scope>
    <source>
        <strain>ATCC 49652 / DSM 12025 / NBRC 103806 / TLS</strain>
    </source>
</reference>
<name>HSLV_CHLTE</name>
<feature type="chain" id="PRO_0000148101" description="ATP-dependent protease subunit HslV">
    <location>
        <begin position="1"/>
        <end position="181"/>
    </location>
</feature>
<feature type="active site" evidence="1">
    <location>
        <position position="11"/>
    </location>
</feature>
<feature type="binding site" evidence="1">
    <location>
        <position position="166"/>
    </location>
    <ligand>
        <name>Na(+)</name>
        <dbReference type="ChEBI" id="CHEBI:29101"/>
    </ligand>
</feature>
<feature type="binding site" evidence="1">
    <location>
        <position position="169"/>
    </location>
    <ligand>
        <name>Na(+)</name>
        <dbReference type="ChEBI" id="CHEBI:29101"/>
    </ligand>
</feature>
<feature type="binding site" evidence="1">
    <location>
        <position position="172"/>
    </location>
    <ligand>
        <name>Na(+)</name>
        <dbReference type="ChEBI" id="CHEBI:29101"/>
    </ligand>
</feature>
<accession>Q8KD62</accession>
<sequence>MGYEKPQIRSTTVIGIIRDGKAALGSDGQMTLGNTVMKHSTRKIRSLYQGRFITGFAGATADALTLLDRFESKLEAYSGKLDRAAVELAKDWRTDKYLRRLEAMLAVVSTDKALIISGTGDVIEPEDGIVAIGSGSMYALAAARSLMKHTTLSAEEIVRESLQIAADICIYTNDHIVIETL</sequence>
<proteinExistence type="inferred from homology"/>
<organism>
    <name type="scientific">Chlorobaculum tepidum (strain ATCC 49652 / DSM 12025 / NBRC 103806 / TLS)</name>
    <name type="common">Chlorobium tepidum</name>
    <dbReference type="NCBI Taxonomy" id="194439"/>
    <lineage>
        <taxon>Bacteria</taxon>
        <taxon>Pseudomonadati</taxon>
        <taxon>Chlorobiota</taxon>
        <taxon>Chlorobiia</taxon>
        <taxon>Chlorobiales</taxon>
        <taxon>Chlorobiaceae</taxon>
        <taxon>Chlorobaculum</taxon>
    </lineage>
</organism>
<protein>
    <recommendedName>
        <fullName evidence="1">ATP-dependent protease subunit HslV</fullName>
        <ecNumber evidence="1">3.4.25.2</ecNumber>
    </recommendedName>
</protein>
<keyword id="KW-0021">Allosteric enzyme</keyword>
<keyword id="KW-0963">Cytoplasm</keyword>
<keyword id="KW-0378">Hydrolase</keyword>
<keyword id="KW-0479">Metal-binding</keyword>
<keyword id="KW-0645">Protease</keyword>
<keyword id="KW-1185">Reference proteome</keyword>
<keyword id="KW-0915">Sodium</keyword>
<keyword id="KW-0888">Threonine protease</keyword>